<accession>P0DMF9</accession>
<organism>
    <name type="scientific">Chaerilus tricostatus</name>
    <name type="common">Scorpion</name>
    <dbReference type="NCBI Taxonomy" id="1055734"/>
    <lineage>
        <taxon>Eukaryota</taxon>
        <taxon>Metazoa</taxon>
        <taxon>Ecdysozoa</taxon>
        <taxon>Arthropoda</taxon>
        <taxon>Chelicerata</taxon>
        <taxon>Arachnida</taxon>
        <taxon>Scorpiones</taxon>
        <taxon>Chaerilida</taxon>
        <taxon>Chaeriloidea</taxon>
        <taxon>Chaerilidae</taxon>
        <taxon>Chaerilus</taxon>
    </lineage>
</organism>
<sequence>MKNNTILFTFLIVFLIASQIEAINWDILIDTIKDKLGKRSEDREFFDFFTDDNLAALEKALKEY</sequence>
<name>NDB4Q_CHATC</name>
<evidence type="ECO:0000250" key="1"/>
<evidence type="ECO:0000255" key="2"/>
<evidence type="ECO:0000305" key="3"/>
<evidence type="ECO:0000305" key="4">
    <source>
    </source>
</evidence>
<dbReference type="SMR" id="P0DMF9"/>
<dbReference type="GO" id="GO:0005576">
    <property type="term" value="C:extracellular region"/>
    <property type="evidence" value="ECO:0007669"/>
    <property type="project" value="UniProtKB-SubCell"/>
</dbReference>
<dbReference type="GO" id="GO:0050688">
    <property type="term" value="P:regulation of defense response to virus"/>
    <property type="evidence" value="ECO:0007669"/>
    <property type="project" value="UniProtKB-KW"/>
</dbReference>
<comment type="function">
    <text evidence="1">Antimicrobial peptide.</text>
</comment>
<comment type="subcellular location">
    <subcellularLocation>
        <location evidence="1">Secreted</location>
    </subcellularLocation>
</comment>
<comment type="tissue specificity">
    <text evidence="3">Expressed by the venom gland.</text>
</comment>
<comment type="miscellaneous">
    <text evidence="4">Shows a low ability to inhibit hepatitis C virus (HCV) infection in Huh7.5.1 cells.</text>
</comment>
<comment type="similarity">
    <text evidence="3">Belongs to the non-disulfide-bridged peptide (NDBP) superfamily. Short antimicrobial peptide (group 4) family.</text>
</comment>
<keyword id="KW-0027">Amidation</keyword>
<keyword id="KW-0929">Antimicrobial</keyword>
<keyword id="KW-0930">Antiviral protein</keyword>
<keyword id="KW-0165">Cleavage on pair of basic residues</keyword>
<keyword id="KW-0964">Secreted</keyword>
<keyword id="KW-0732">Signal</keyword>
<reference key="1">
    <citation type="journal article" date="2013" name="Biomaterials">
        <title>Design of histidine-rich peptides with enhanced bioavailability and inhibitory activity against hepatitis C virus.</title>
        <authorList>
            <person name="Hong W."/>
            <person name="Zhang R."/>
            <person name="Di Z."/>
            <person name="He Y."/>
            <person name="Zhao Z."/>
            <person name="Hu J."/>
            <person name="Wu Y."/>
            <person name="Li W."/>
            <person name="Cao Z."/>
        </authorList>
    </citation>
    <scope>NUCLEOTIDE SEQUENCE [MRNA]</scope>
    <scope>SYNTHESIS OF 24-36</scope>
    <source>
        <tissue>Venom gland</tissue>
    </source>
</reference>
<protein>
    <recommendedName>
        <fullName>Peptide Ctri9677</fullName>
    </recommendedName>
</protein>
<feature type="signal peptide" evidence="2">
    <location>
        <begin position="1"/>
        <end position="22"/>
    </location>
</feature>
<feature type="peptide" id="PRO_0000428709" description="Peptide Ctri9677">
    <location>
        <begin position="23"/>
        <end position="36"/>
    </location>
</feature>
<feature type="propeptide" id="PRO_0000428710" evidence="1">
    <location>
        <begin position="40"/>
        <end position="64"/>
    </location>
</feature>
<feature type="modified residue" description="Leucine amide" evidence="1">
    <location>
        <position position="36"/>
    </location>
</feature>
<proteinExistence type="inferred from homology"/>